<name>DCD_HELAH</name>
<keyword id="KW-0378">Hydrolase</keyword>
<keyword id="KW-0546">Nucleotide metabolism</keyword>
<keyword id="KW-0547">Nucleotide-binding</keyword>
<feature type="chain" id="PRO_1000009738" description="dCTP deaminase">
    <location>
        <begin position="1"/>
        <end position="188"/>
    </location>
</feature>
<feature type="active site" description="Proton donor/acceptor" evidence="1">
    <location>
        <position position="135"/>
    </location>
</feature>
<feature type="binding site" evidence="1">
    <location>
        <begin position="109"/>
        <end position="114"/>
    </location>
    <ligand>
        <name>dCTP</name>
        <dbReference type="ChEBI" id="CHEBI:61481"/>
    </ligand>
</feature>
<feature type="binding site" evidence="1">
    <location>
        <position position="154"/>
    </location>
    <ligand>
        <name>dCTP</name>
        <dbReference type="ChEBI" id="CHEBI:61481"/>
    </ligand>
</feature>
<feature type="binding site" evidence="1">
    <location>
        <position position="168"/>
    </location>
    <ligand>
        <name>dCTP</name>
        <dbReference type="ChEBI" id="CHEBI:61481"/>
    </ligand>
</feature>
<feature type="binding site" evidence="1">
    <location>
        <position position="178"/>
    </location>
    <ligand>
        <name>dCTP</name>
        <dbReference type="ChEBI" id="CHEBI:61481"/>
    </ligand>
</feature>
<dbReference type="EC" id="3.5.4.13" evidence="1"/>
<dbReference type="EMBL" id="AM260522">
    <property type="protein sequence ID" value="CAJ99321.1"/>
    <property type="molecule type" value="Genomic_DNA"/>
</dbReference>
<dbReference type="RefSeq" id="WP_011577435.1">
    <property type="nucleotide sequence ID" value="NC_008229.1"/>
</dbReference>
<dbReference type="SMR" id="Q17YF5"/>
<dbReference type="STRING" id="382638.Hac_0495"/>
<dbReference type="GeneID" id="31757995"/>
<dbReference type="KEGG" id="hac:Hac_0495"/>
<dbReference type="eggNOG" id="COG0717">
    <property type="taxonomic scope" value="Bacteria"/>
</dbReference>
<dbReference type="HOGENOM" id="CLU_087476_4_0_7"/>
<dbReference type="BioCyc" id="HACI382638:HAC_RS02255-MONOMER"/>
<dbReference type="UniPathway" id="UPA00610">
    <property type="reaction ID" value="UER00665"/>
</dbReference>
<dbReference type="Proteomes" id="UP000000775">
    <property type="component" value="Chromosome"/>
</dbReference>
<dbReference type="GO" id="GO:0008829">
    <property type="term" value="F:dCTP deaminase activity"/>
    <property type="evidence" value="ECO:0007669"/>
    <property type="project" value="UniProtKB-UniRule"/>
</dbReference>
<dbReference type="GO" id="GO:0000166">
    <property type="term" value="F:nucleotide binding"/>
    <property type="evidence" value="ECO:0007669"/>
    <property type="project" value="UniProtKB-KW"/>
</dbReference>
<dbReference type="GO" id="GO:0006226">
    <property type="term" value="P:dUMP biosynthetic process"/>
    <property type="evidence" value="ECO:0007669"/>
    <property type="project" value="UniProtKB-UniPathway"/>
</dbReference>
<dbReference type="GO" id="GO:0006229">
    <property type="term" value="P:dUTP biosynthetic process"/>
    <property type="evidence" value="ECO:0007669"/>
    <property type="project" value="UniProtKB-UniRule"/>
</dbReference>
<dbReference type="GO" id="GO:0015949">
    <property type="term" value="P:nucleobase-containing small molecule interconversion"/>
    <property type="evidence" value="ECO:0007669"/>
    <property type="project" value="TreeGrafter"/>
</dbReference>
<dbReference type="CDD" id="cd07557">
    <property type="entry name" value="trimeric_dUTPase"/>
    <property type="match status" value="1"/>
</dbReference>
<dbReference type="FunFam" id="2.70.40.10:FF:000006">
    <property type="entry name" value="dCTP deaminase"/>
    <property type="match status" value="1"/>
</dbReference>
<dbReference type="Gene3D" id="2.70.40.10">
    <property type="match status" value="1"/>
</dbReference>
<dbReference type="HAMAP" id="MF_00146">
    <property type="entry name" value="dCTP_deaminase"/>
    <property type="match status" value="1"/>
</dbReference>
<dbReference type="InterPro" id="IPR011962">
    <property type="entry name" value="dCTP_deaminase"/>
</dbReference>
<dbReference type="InterPro" id="IPR036157">
    <property type="entry name" value="dUTPase-like_sf"/>
</dbReference>
<dbReference type="InterPro" id="IPR033704">
    <property type="entry name" value="dUTPase_trimeric"/>
</dbReference>
<dbReference type="NCBIfam" id="TIGR02274">
    <property type="entry name" value="dCTP_deam"/>
    <property type="match status" value="1"/>
</dbReference>
<dbReference type="PANTHER" id="PTHR42680">
    <property type="entry name" value="DCTP DEAMINASE"/>
    <property type="match status" value="1"/>
</dbReference>
<dbReference type="PANTHER" id="PTHR42680:SF3">
    <property type="entry name" value="DCTP DEAMINASE"/>
    <property type="match status" value="1"/>
</dbReference>
<dbReference type="Pfam" id="PF22769">
    <property type="entry name" value="DCD"/>
    <property type="match status" value="1"/>
</dbReference>
<dbReference type="SUPFAM" id="SSF51283">
    <property type="entry name" value="dUTPase-like"/>
    <property type="match status" value="1"/>
</dbReference>
<accession>Q17YF5</accession>
<evidence type="ECO:0000255" key="1">
    <source>
        <dbReference type="HAMAP-Rule" id="MF_00146"/>
    </source>
</evidence>
<sequence length="188" mass="20858">MGLKADSWIKKMSLEHGMISPFCEKQVGKNVISYGLSSYGYDIRVGGEFMLFDNKNALIDPKNFDPNNATKIDACKEGYFILPANAFALAHTIEYFKMPKDTLAICLGKSTYARCGIIVNVTPFEPEFEGYITIEISNTTNLPAKVYANEGIAQVVFLQGDEVCEQSYKDRGGKYQGQVGITLPKILK</sequence>
<reference key="1">
    <citation type="journal article" date="2006" name="PLoS Genet.">
        <title>Who ate whom? Adaptive Helicobacter genomic changes that accompanied a host jump from early humans to large felines.</title>
        <authorList>
            <person name="Eppinger M."/>
            <person name="Baar C."/>
            <person name="Linz B."/>
            <person name="Raddatz G."/>
            <person name="Lanz C."/>
            <person name="Keller H."/>
            <person name="Morelli G."/>
            <person name="Gressmann H."/>
            <person name="Achtman M."/>
            <person name="Schuster S.C."/>
        </authorList>
    </citation>
    <scope>NUCLEOTIDE SEQUENCE [LARGE SCALE GENOMIC DNA]</scope>
    <source>
        <strain>Sheeba</strain>
    </source>
</reference>
<comment type="function">
    <text evidence="1">Catalyzes the deamination of dCTP to dUTP.</text>
</comment>
<comment type="catalytic activity">
    <reaction evidence="1">
        <text>dCTP + H2O + H(+) = dUTP + NH4(+)</text>
        <dbReference type="Rhea" id="RHEA:22680"/>
        <dbReference type="ChEBI" id="CHEBI:15377"/>
        <dbReference type="ChEBI" id="CHEBI:15378"/>
        <dbReference type="ChEBI" id="CHEBI:28938"/>
        <dbReference type="ChEBI" id="CHEBI:61481"/>
        <dbReference type="ChEBI" id="CHEBI:61555"/>
        <dbReference type="EC" id="3.5.4.13"/>
    </reaction>
</comment>
<comment type="pathway">
    <text evidence="1">Pyrimidine metabolism; dUMP biosynthesis; dUMP from dCTP (dUTP route): step 1/2.</text>
</comment>
<comment type="subunit">
    <text evidence="1">Homotrimer.</text>
</comment>
<comment type="similarity">
    <text evidence="1">Belongs to the dCTP deaminase family.</text>
</comment>
<organism>
    <name type="scientific">Helicobacter acinonychis (strain Sheeba)</name>
    <dbReference type="NCBI Taxonomy" id="382638"/>
    <lineage>
        <taxon>Bacteria</taxon>
        <taxon>Pseudomonadati</taxon>
        <taxon>Campylobacterota</taxon>
        <taxon>Epsilonproteobacteria</taxon>
        <taxon>Campylobacterales</taxon>
        <taxon>Helicobacteraceae</taxon>
        <taxon>Helicobacter</taxon>
    </lineage>
</organism>
<protein>
    <recommendedName>
        <fullName evidence="1">dCTP deaminase</fullName>
        <ecNumber evidence="1">3.5.4.13</ecNumber>
    </recommendedName>
    <alternativeName>
        <fullName evidence="1">Deoxycytidine triphosphate deaminase</fullName>
    </alternativeName>
</protein>
<proteinExistence type="inferred from homology"/>
<gene>
    <name evidence="1" type="primary">dcd</name>
    <name type="ordered locus">Hac_0495</name>
</gene>